<comment type="function">
    <text evidence="1">Part of the ABC transporter complex LolCDE involved in the translocation of mature outer membrane-directed lipoproteins, from the inner membrane to the periplasmic chaperone, LolA. Responsible for the formation of the LolA-lipoprotein complex in an ATP-dependent manner.</text>
</comment>
<comment type="subunit">
    <text evidence="1">The complex is composed of two ATP-binding proteins (LolD) and two transmembrane proteins (LolC and LolE).</text>
</comment>
<comment type="subcellular location">
    <subcellularLocation>
        <location evidence="1">Cell inner membrane</location>
        <topology evidence="1">Peripheral membrane protein</topology>
    </subcellularLocation>
</comment>
<comment type="similarity">
    <text evidence="1">Belongs to the ABC transporter superfamily. Lipoprotein translocase (TC 3.A.1.125) family.</text>
</comment>
<reference key="1">
    <citation type="journal article" date="2006" name="J. Bacteriol.">
        <title>Comparative genomic evidence for a close relationship between the dimorphic prosthecate bacteria Hyphomonas neptunium and Caulobacter crescentus.</title>
        <authorList>
            <person name="Badger J.H."/>
            <person name="Hoover T.R."/>
            <person name="Brun Y.V."/>
            <person name="Weiner R.M."/>
            <person name="Laub M.T."/>
            <person name="Alexandre G."/>
            <person name="Mrazek J."/>
            <person name="Ren Q."/>
            <person name="Paulsen I.T."/>
            <person name="Nelson K.E."/>
            <person name="Khouri H.M."/>
            <person name="Radune D."/>
            <person name="Sosa J."/>
            <person name="Dodson R.J."/>
            <person name="Sullivan S.A."/>
            <person name="Rosovitz M.J."/>
            <person name="Madupu R."/>
            <person name="Brinkac L.M."/>
            <person name="Durkin A.S."/>
            <person name="Daugherty S.C."/>
            <person name="Kothari S.P."/>
            <person name="Giglio M.G."/>
            <person name="Zhou L."/>
            <person name="Haft D.H."/>
            <person name="Selengut J.D."/>
            <person name="Davidsen T.M."/>
            <person name="Yang Q."/>
            <person name="Zafar N."/>
            <person name="Ward N.L."/>
        </authorList>
    </citation>
    <scope>NUCLEOTIDE SEQUENCE [LARGE SCALE GENOMIC DNA]</scope>
    <source>
        <strain>ATCC 15444</strain>
    </source>
</reference>
<feature type="chain" id="PRO_0000272096" description="Lipoprotein-releasing system ATP-binding protein LolD">
    <location>
        <begin position="1"/>
        <end position="228"/>
    </location>
</feature>
<feature type="domain" description="ABC transporter" evidence="1">
    <location>
        <begin position="6"/>
        <end position="227"/>
    </location>
</feature>
<feature type="binding site" evidence="1">
    <location>
        <begin position="42"/>
        <end position="49"/>
    </location>
    <ligand>
        <name>ATP</name>
        <dbReference type="ChEBI" id="CHEBI:30616"/>
    </ligand>
</feature>
<name>LOLD_HYPNA</name>
<dbReference type="EC" id="7.6.2.-" evidence="1"/>
<dbReference type="EMBL" id="CP000158">
    <property type="protein sequence ID" value="ABI75416.1"/>
    <property type="molecule type" value="Genomic_DNA"/>
</dbReference>
<dbReference type="RefSeq" id="WP_011646770.1">
    <property type="nucleotide sequence ID" value="NC_008358.1"/>
</dbReference>
<dbReference type="SMR" id="Q0C1C3"/>
<dbReference type="STRING" id="228405.HNE_1766"/>
<dbReference type="KEGG" id="hne:HNE_1766"/>
<dbReference type="eggNOG" id="COG1136">
    <property type="taxonomic scope" value="Bacteria"/>
</dbReference>
<dbReference type="HOGENOM" id="CLU_000604_1_22_5"/>
<dbReference type="Proteomes" id="UP000001959">
    <property type="component" value="Chromosome"/>
</dbReference>
<dbReference type="GO" id="GO:0005886">
    <property type="term" value="C:plasma membrane"/>
    <property type="evidence" value="ECO:0007669"/>
    <property type="project" value="UniProtKB-SubCell"/>
</dbReference>
<dbReference type="GO" id="GO:0005524">
    <property type="term" value="F:ATP binding"/>
    <property type="evidence" value="ECO:0007669"/>
    <property type="project" value="UniProtKB-KW"/>
</dbReference>
<dbReference type="GO" id="GO:0016887">
    <property type="term" value="F:ATP hydrolysis activity"/>
    <property type="evidence" value="ECO:0007669"/>
    <property type="project" value="InterPro"/>
</dbReference>
<dbReference type="GO" id="GO:0022857">
    <property type="term" value="F:transmembrane transporter activity"/>
    <property type="evidence" value="ECO:0007669"/>
    <property type="project" value="TreeGrafter"/>
</dbReference>
<dbReference type="GO" id="GO:0044874">
    <property type="term" value="P:lipoprotein localization to outer membrane"/>
    <property type="evidence" value="ECO:0007669"/>
    <property type="project" value="TreeGrafter"/>
</dbReference>
<dbReference type="GO" id="GO:0089705">
    <property type="term" value="P:protein localization to outer membrane"/>
    <property type="evidence" value="ECO:0007669"/>
    <property type="project" value="TreeGrafter"/>
</dbReference>
<dbReference type="CDD" id="cd03255">
    <property type="entry name" value="ABC_MJ0796_LolCDE_FtsE"/>
    <property type="match status" value="1"/>
</dbReference>
<dbReference type="FunFam" id="3.40.50.300:FF:000032">
    <property type="entry name" value="Export ABC transporter ATP-binding protein"/>
    <property type="match status" value="1"/>
</dbReference>
<dbReference type="Gene3D" id="3.40.50.300">
    <property type="entry name" value="P-loop containing nucleotide triphosphate hydrolases"/>
    <property type="match status" value="1"/>
</dbReference>
<dbReference type="InterPro" id="IPR003593">
    <property type="entry name" value="AAA+_ATPase"/>
</dbReference>
<dbReference type="InterPro" id="IPR003439">
    <property type="entry name" value="ABC_transporter-like_ATP-bd"/>
</dbReference>
<dbReference type="InterPro" id="IPR017871">
    <property type="entry name" value="ABC_transporter-like_CS"/>
</dbReference>
<dbReference type="InterPro" id="IPR015854">
    <property type="entry name" value="ABC_transpr_LolD-like"/>
</dbReference>
<dbReference type="InterPro" id="IPR017911">
    <property type="entry name" value="MacB-like_ATP-bd"/>
</dbReference>
<dbReference type="InterPro" id="IPR027417">
    <property type="entry name" value="P-loop_NTPase"/>
</dbReference>
<dbReference type="PANTHER" id="PTHR24220">
    <property type="entry name" value="IMPORT ATP-BINDING PROTEIN"/>
    <property type="match status" value="1"/>
</dbReference>
<dbReference type="PANTHER" id="PTHR24220:SF689">
    <property type="entry name" value="LIPOPROTEIN-RELEASING SYSTEM ATP-BINDING PROTEIN LOLD"/>
    <property type="match status" value="1"/>
</dbReference>
<dbReference type="Pfam" id="PF00005">
    <property type="entry name" value="ABC_tran"/>
    <property type="match status" value="1"/>
</dbReference>
<dbReference type="SMART" id="SM00382">
    <property type="entry name" value="AAA"/>
    <property type="match status" value="1"/>
</dbReference>
<dbReference type="SUPFAM" id="SSF52540">
    <property type="entry name" value="P-loop containing nucleoside triphosphate hydrolases"/>
    <property type="match status" value="1"/>
</dbReference>
<dbReference type="PROSITE" id="PS00211">
    <property type="entry name" value="ABC_TRANSPORTER_1"/>
    <property type="match status" value="1"/>
</dbReference>
<dbReference type="PROSITE" id="PS50893">
    <property type="entry name" value="ABC_TRANSPORTER_2"/>
    <property type="match status" value="1"/>
</dbReference>
<dbReference type="PROSITE" id="PS51244">
    <property type="entry name" value="LOLD"/>
    <property type="match status" value="1"/>
</dbReference>
<evidence type="ECO:0000255" key="1">
    <source>
        <dbReference type="HAMAP-Rule" id="MF_01708"/>
    </source>
</evidence>
<gene>
    <name evidence="1" type="primary">lolD</name>
    <name type="ordered locus">HNE_1766</name>
</gene>
<sequence length="228" mass="24802">MMQPVLELLGIDRTYHTAAGALQVLQGTDLRVSPGELVGLVGPSGSGKSTLLHTAGLLERPEGGSIFLDGIDCLKLNDNGRTSIRRRKIGFVYQFHHLLPEFNAIDNIAMPLMIAGVKKSKAREKASSLLEVMGLEERAYHQPGQLSGGEQQRVAIARALANDPKLVIADEPTGNLDPTTTERVFGTLIKMVREEGAGVLVATHNFALTRHMDRILTLKDGKLIDYVE</sequence>
<organism>
    <name type="scientific">Hyphomonas neptunium (strain ATCC 15444)</name>
    <dbReference type="NCBI Taxonomy" id="228405"/>
    <lineage>
        <taxon>Bacteria</taxon>
        <taxon>Pseudomonadati</taxon>
        <taxon>Pseudomonadota</taxon>
        <taxon>Alphaproteobacteria</taxon>
        <taxon>Hyphomonadales</taxon>
        <taxon>Hyphomonadaceae</taxon>
        <taxon>Hyphomonas</taxon>
    </lineage>
</organism>
<keyword id="KW-0067">ATP-binding</keyword>
<keyword id="KW-0997">Cell inner membrane</keyword>
<keyword id="KW-1003">Cell membrane</keyword>
<keyword id="KW-0472">Membrane</keyword>
<keyword id="KW-0547">Nucleotide-binding</keyword>
<keyword id="KW-1185">Reference proteome</keyword>
<keyword id="KW-1278">Translocase</keyword>
<keyword id="KW-0813">Transport</keyword>
<accession>Q0C1C3</accession>
<proteinExistence type="inferred from homology"/>
<protein>
    <recommendedName>
        <fullName evidence="1">Lipoprotein-releasing system ATP-binding protein LolD</fullName>
        <ecNumber evidence="1">7.6.2.-</ecNumber>
    </recommendedName>
</protein>